<name>RS11_BACSU</name>
<dbReference type="EMBL" id="M13957">
    <property type="protein sequence ID" value="AAA22707.1"/>
    <property type="molecule type" value="Genomic_DNA"/>
</dbReference>
<dbReference type="EMBL" id="M26414">
    <property type="protein sequence ID" value="AAA22216.1"/>
    <property type="molecule type" value="Genomic_DNA"/>
</dbReference>
<dbReference type="EMBL" id="L47971">
    <property type="protein sequence ID" value="AAB06825.1"/>
    <property type="molecule type" value="Genomic_DNA"/>
</dbReference>
<dbReference type="EMBL" id="AL009126">
    <property type="protein sequence ID" value="CAB11918.1"/>
    <property type="molecule type" value="Genomic_DNA"/>
</dbReference>
<dbReference type="PIR" id="D32307">
    <property type="entry name" value="R3BSS1"/>
</dbReference>
<dbReference type="RefSeq" id="NP_388023.1">
    <property type="nucleotide sequence ID" value="NC_000964.3"/>
</dbReference>
<dbReference type="RefSeq" id="WP_009966385.1">
    <property type="nucleotide sequence ID" value="NZ_OZ025638.1"/>
</dbReference>
<dbReference type="PDB" id="3J9W">
    <property type="method" value="EM"/>
    <property type="resolution" value="3.90 A"/>
    <property type="chains" value="AK=1-131"/>
</dbReference>
<dbReference type="PDB" id="5NJT">
    <property type="method" value="EM"/>
    <property type="resolution" value="3.80 A"/>
    <property type="chains" value="K=12-129"/>
</dbReference>
<dbReference type="PDB" id="6HA1">
    <property type="method" value="EM"/>
    <property type="resolution" value="3.10 A"/>
    <property type="chains" value="k=1-131"/>
</dbReference>
<dbReference type="PDB" id="6HA8">
    <property type="method" value="EM"/>
    <property type="resolution" value="3.50 A"/>
    <property type="chains" value="k=1-131"/>
</dbReference>
<dbReference type="PDB" id="6HTQ">
    <property type="method" value="EM"/>
    <property type="resolution" value="4.50 A"/>
    <property type="chains" value="k=18-131"/>
</dbReference>
<dbReference type="PDB" id="7O5B">
    <property type="method" value="EM"/>
    <property type="resolution" value="3.33 A"/>
    <property type="chains" value="K=1-131"/>
</dbReference>
<dbReference type="PDB" id="7QGU">
    <property type="method" value="EM"/>
    <property type="resolution" value="4.75 A"/>
    <property type="chains" value="p=1-131"/>
</dbReference>
<dbReference type="PDB" id="7QH4">
    <property type="method" value="EM"/>
    <property type="resolution" value="5.45 A"/>
    <property type="chains" value="o=1-131"/>
</dbReference>
<dbReference type="PDB" id="7QV1">
    <property type="method" value="EM"/>
    <property type="resolution" value="3.50 A"/>
    <property type="chains" value="k=1-131"/>
</dbReference>
<dbReference type="PDB" id="7QV2">
    <property type="method" value="EM"/>
    <property type="resolution" value="3.50 A"/>
    <property type="chains" value="k=1-131"/>
</dbReference>
<dbReference type="PDB" id="7QV3">
    <property type="method" value="EM"/>
    <property type="resolution" value="5.14 A"/>
    <property type="chains" value="k=1-131"/>
</dbReference>
<dbReference type="PDB" id="8BUU">
    <property type="method" value="EM"/>
    <property type="resolution" value="2.90 A"/>
    <property type="chains" value="k=1-131"/>
</dbReference>
<dbReference type="PDB" id="8CDU">
    <property type="method" value="EM"/>
    <property type="resolution" value="3.10 A"/>
    <property type="chains" value="V=1-131"/>
</dbReference>
<dbReference type="PDB" id="8CDV">
    <property type="method" value="EM"/>
    <property type="resolution" value="4.73 A"/>
    <property type="chains" value="V=1-131"/>
</dbReference>
<dbReference type="PDB" id="8CEC">
    <property type="method" value="EM"/>
    <property type="resolution" value="3.57 A"/>
    <property type="chains" value="V=1-131"/>
</dbReference>
<dbReference type="PDB" id="8CED">
    <property type="method" value="EM"/>
    <property type="resolution" value="4.15 A"/>
    <property type="chains" value="V=1-131"/>
</dbReference>
<dbReference type="PDB" id="8CEE">
    <property type="method" value="EM"/>
    <property type="resolution" value="3.70 A"/>
    <property type="chains" value="V=1-131"/>
</dbReference>
<dbReference type="PDB" id="8QCQ">
    <property type="method" value="EM"/>
    <property type="resolution" value="2.30 A"/>
    <property type="chains" value="k=1-131"/>
</dbReference>
<dbReference type="PDB" id="8QPP">
    <property type="method" value="EM"/>
    <property type="resolution" value="3.40 A"/>
    <property type="chains" value="K=1-131"/>
</dbReference>
<dbReference type="PDB" id="8R55">
    <property type="method" value="EM"/>
    <property type="resolution" value="3.57 A"/>
    <property type="chains" value="K=1-131"/>
</dbReference>
<dbReference type="PDBsum" id="3J9W"/>
<dbReference type="PDBsum" id="5NJT"/>
<dbReference type="PDBsum" id="6HA1"/>
<dbReference type="PDBsum" id="6HA8"/>
<dbReference type="PDBsum" id="6HTQ"/>
<dbReference type="PDBsum" id="7O5B"/>
<dbReference type="PDBsum" id="7QGU"/>
<dbReference type="PDBsum" id="7QH4"/>
<dbReference type="PDBsum" id="7QV1"/>
<dbReference type="PDBsum" id="7QV2"/>
<dbReference type="PDBsum" id="7QV3"/>
<dbReference type="PDBsum" id="8BUU"/>
<dbReference type="PDBsum" id="8CDU"/>
<dbReference type="PDBsum" id="8CDV"/>
<dbReference type="PDBsum" id="8CEC"/>
<dbReference type="PDBsum" id="8CED"/>
<dbReference type="PDBsum" id="8CEE"/>
<dbReference type="PDBsum" id="8QCQ"/>
<dbReference type="PDBsum" id="8QPP"/>
<dbReference type="PDBsum" id="8R55"/>
<dbReference type="EMDB" id="EMD-0176"/>
<dbReference type="EMDB" id="EMD-0177"/>
<dbReference type="EMDB" id="EMD-0270"/>
<dbReference type="EMDB" id="EMD-12734"/>
<dbReference type="EMDB" id="EMD-14157"/>
<dbReference type="EMDB" id="EMD-14158"/>
<dbReference type="EMDB" id="EMD-14159"/>
<dbReference type="EMDB" id="EMD-16246"/>
<dbReference type="EMDB" id="EMD-16595"/>
<dbReference type="EMDB" id="EMD-16596"/>
<dbReference type="EMDB" id="EMD-16605"/>
<dbReference type="EMDB" id="EMD-16606"/>
<dbReference type="EMDB" id="EMD-16607"/>
<dbReference type="EMDB" id="EMD-18332"/>
<dbReference type="EMDB" id="EMD-3656"/>
<dbReference type="SMR" id="P04969"/>
<dbReference type="FunCoup" id="P04969">
    <property type="interactions" value="716"/>
</dbReference>
<dbReference type="IntAct" id="P04969">
    <property type="interactions" value="1"/>
</dbReference>
<dbReference type="MINT" id="P04969"/>
<dbReference type="STRING" id="224308.BSU01420"/>
<dbReference type="jPOST" id="P04969"/>
<dbReference type="PaxDb" id="224308-BSU01420"/>
<dbReference type="EnsemblBacteria" id="CAB11918">
    <property type="protein sequence ID" value="CAB11918"/>
    <property type="gene ID" value="BSU_01420"/>
</dbReference>
<dbReference type="GeneID" id="86875459"/>
<dbReference type="GeneID" id="938926"/>
<dbReference type="KEGG" id="bsu:BSU01420"/>
<dbReference type="PATRIC" id="fig|224308.179.peg.146"/>
<dbReference type="eggNOG" id="COG0100">
    <property type="taxonomic scope" value="Bacteria"/>
</dbReference>
<dbReference type="InParanoid" id="P04969"/>
<dbReference type="OrthoDB" id="9806415at2"/>
<dbReference type="PhylomeDB" id="P04969"/>
<dbReference type="BioCyc" id="BSUB:BSU01420-MONOMER"/>
<dbReference type="PRO" id="PR:P04969"/>
<dbReference type="Proteomes" id="UP000001570">
    <property type="component" value="Chromosome"/>
</dbReference>
<dbReference type="GO" id="GO:0022627">
    <property type="term" value="C:cytosolic small ribosomal subunit"/>
    <property type="evidence" value="ECO:0000318"/>
    <property type="project" value="GO_Central"/>
</dbReference>
<dbReference type="GO" id="GO:0019843">
    <property type="term" value="F:rRNA binding"/>
    <property type="evidence" value="ECO:0007669"/>
    <property type="project" value="UniProtKB-UniRule"/>
</dbReference>
<dbReference type="GO" id="GO:0003735">
    <property type="term" value="F:structural constituent of ribosome"/>
    <property type="evidence" value="ECO:0000318"/>
    <property type="project" value="GO_Central"/>
</dbReference>
<dbReference type="GO" id="GO:0006412">
    <property type="term" value="P:translation"/>
    <property type="evidence" value="ECO:0000318"/>
    <property type="project" value="GO_Central"/>
</dbReference>
<dbReference type="FunFam" id="3.30.420.80:FF:000001">
    <property type="entry name" value="30S ribosomal protein S11"/>
    <property type="match status" value="1"/>
</dbReference>
<dbReference type="Gene3D" id="3.30.420.80">
    <property type="entry name" value="Ribosomal protein S11"/>
    <property type="match status" value="1"/>
</dbReference>
<dbReference type="HAMAP" id="MF_01310">
    <property type="entry name" value="Ribosomal_uS11"/>
    <property type="match status" value="1"/>
</dbReference>
<dbReference type="InterPro" id="IPR001971">
    <property type="entry name" value="Ribosomal_uS11"/>
</dbReference>
<dbReference type="InterPro" id="IPR019981">
    <property type="entry name" value="Ribosomal_uS11_bac-type"/>
</dbReference>
<dbReference type="InterPro" id="IPR018102">
    <property type="entry name" value="Ribosomal_uS11_CS"/>
</dbReference>
<dbReference type="InterPro" id="IPR036967">
    <property type="entry name" value="Ribosomal_uS11_sf"/>
</dbReference>
<dbReference type="NCBIfam" id="NF003698">
    <property type="entry name" value="PRK05309.1"/>
    <property type="match status" value="1"/>
</dbReference>
<dbReference type="NCBIfam" id="TIGR03632">
    <property type="entry name" value="uS11_bact"/>
    <property type="match status" value="1"/>
</dbReference>
<dbReference type="PANTHER" id="PTHR11759">
    <property type="entry name" value="40S RIBOSOMAL PROTEIN S14/30S RIBOSOMAL PROTEIN S11"/>
    <property type="match status" value="1"/>
</dbReference>
<dbReference type="Pfam" id="PF00411">
    <property type="entry name" value="Ribosomal_S11"/>
    <property type="match status" value="1"/>
</dbReference>
<dbReference type="PIRSF" id="PIRSF002131">
    <property type="entry name" value="Ribosomal_S11"/>
    <property type="match status" value="1"/>
</dbReference>
<dbReference type="SUPFAM" id="SSF53137">
    <property type="entry name" value="Translational machinery components"/>
    <property type="match status" value="1"/>
</dbReference>
<dbReference type="PROSITE" id="PS00054">
    <property type="entry name" value="RIBOSOMAL_S11"/>
    <property type="match status" value="1"/>
</dbReference>
<sequence>MAAARKSNTRKRRVKKNIESGIAHIRSTFNNTIVTITDTHGNAISWSSAGALGFRGSRKSTPFAAQMAAETAAKGSIEHGLKTLEVTVKGPGSGREAAIRALQAAGLEVTAIRDVTPVPHNGCRPPKRRRV</sequence>
<gene>
    <name evidence="1" type="primary">rpsK</name>
    <name type="ordered locus">BSU01420</name>
</gene>
<accession>P04969</accession>
<evidence type="ECO:0000255" key="1">
    <source>
        <dbReference type="HAMAP-Rule" id="MF_01310"/>
    </source>
</evidence>
<evidence type="ECO:0000269" key="2">
    <source>
    </source>
</evidence>
<evidence type="ECO:0000269" key="3">
    <source>
    </source>
</evidence>
<evidence type="ECO:0000303" key="4">
    <source>
    </source>
</evidence>
<evidence type="ECO:0000305" key="5"/>
<evidence type="ECO:0007744" key="6">
    <source>
        <dbReference type="PDB" id="6HA1"/>
    </source>
</evidence>
<evidence type="ECO:0007744" key="7">
    <source>
        <dbReference type="PDB" id="6HA8"/>
    </source>
</evidence>
<evidence type="ECO:0007829" key="8">
    <source>
        <dbReference type="PDB" id="8CDU"/>
    </source>
</evidence>
<reference key="1">
    <citation type="journal article" date="1986" name="J. Bacteriol.">
        <title>Gene for the alpha subunit of Bacillus subtilis RNA polymerase maps in the ribosomal protein gene cluster.</title>
        <authorList>
            <person name="Suh J.-W."/>
            <person name="Boylan S.A."/>
            <person name="Price C.W."/>
        </authorList>
    </citation>
    <scope>NUCLEOTIDE SEQUENCE [GENOMIC DNA]</scope>
</reference>
<reference key="2">
    <citation type="journal article" date="1989" name="J. Bacteriol.">
        <title>Gene encoding the alpha core subunit of Bacillus subtilis RNA polymerase is cotranscribed with the genes for initiation factor 1 and ribosomal proteins B, S13, S11, and L17.</title>
        <authorList>
            <person name="Boylan S.A."/>
            <person name="Suh J.-W."/>
            <person name="Thomas S.M."/>
            <person name="Price C.W."/>
        </authorList>
    </citation>
    <scope>NUCLEOTIDE SEQUENCE [GENOMIC DNA]</scope>
</reference>
<reference key="3">
    <citation type="journal article" date="1996" name="Gene">
        <title>Genetic and transcriptional organization of the Bacillus subtilis spc-alpha region.</title>
        <authorList>
            <person name="Suh J.-W."/>
            <person name="Boylan S.A."/>
            <person name="Oh S.H."/>
            <person name="Price C.W."/>
        </authorList>
    </citation>
    <scope>NUCLEOTIDE SEQUENCE [GENOMIC DNA]</scope>
    <source>
        <strain>168 / Marburg / ATCC 6051 / DSM 10 / JCM 1465 / NBRC 13719 / NCIMB 3610 / NRRL NRS-744 / VKM B-501</strain>
    </source>
</reference>
<reference key="4">
    <citation type="journal article" date="1997" name="Nature">
        <title>The complete genome sequence of the Gram-positive bacterium Bacillus subtilis.</title>
        <authorList>
            <person name="Kunst F."/>
            <person name="Ogasawara N."/>
            <person name="Moszer I."/>
            <person name="Albertini A.M."/>
            <person name="Alloni G."/>
            <person name="Azevedo V."/>
            <person name="Bertero M.G."/>
            <person name="Bessieres P."/>
            <person name="Bolotin A."/>
            <person name="Borchert S."/>
            <person name="Borriss R."/>
            <person name="Boursier L."/>
            <person name="Brans A."/>
            <person name="Braun M."/>
            <person name="Brignell S.C."/>
            <person name="Bron S."/>
            <person name="Brouillet S."/>
            <person name="Bruschi C.V."/>
            <person name="Caldwell B."/>
            <person name="Capuano V."/>
            <person name="Carter N.M."/>
            <person name="Choi S.-K."/>
            <person name="Codani J.-J."/>
            <person name="Connerton I.F."/>
            <person name="Cummings N.J."/>
            <person name="Daniel R.A."/>
            <person name="Denizot F."/>
            <person name="Devine K.M."/>
            <person name="Duesterhoeft A."/>
            <person name="Ehrlich S.D."/>
            <person name="Emmerson P.T."/>
            <person name="Entian K.-D."/>
            <person name="Errington J."/>
            <person name="Fabret C."/>
            <person name="Ferrari E."/>
            <person name="Foulger D."/>
            <person name="Fritz C."/>
            <person name="Fujita M."/>
            <person name="Fujita Y."/>
            <person name="Fuma S."/>
            <person name="Galizzi A."/>
            <person name="Galleron N."/>
            <person name="Ghim S.-Y."/>
            <person name="Glaser P."/>
            <person name="Goffeau A."/>
            <person name="Golightly E.J."/>
            <person name="Grandi G."/>
            <person name="Guiseppi G."/>
            <person name="Guy B.J."/>
            <person name="Haga K."/>
            <person name="Haiech J."/>
            <person name="Harwood C.R."/>
            <person name="Henaut A."/>
            <person name="Hilbert H."/>
            <person name="Holsappel S."/>
            <person name="Hosono S."/>
            <person name="Hullo M.-F."/>
            <person name="Itaya M."/>
            <person name="Jones L.-M."/>
            <person name="Joris B."/>
            <person name="Karamata D."/>
            <person name="Kasahara Y."/>
            <person name="Klaerr-Blanchard M."/>
            <person name="Klein C."/>
            <person name="Kobayashi Y."/>
            <person name="Koetter P."/>
            <person name="Koningstein G."/>
            <person name="Krogh S."/>
            <person name="Kumano M."/>
            <person name="Kurita K."/>
            <person name="Lapidus A."/>
            <person name="Lardinois S."/>
            <person name="Lauber J."/>
            <person name="Lazarevic V."/>
            <person name="Lee S.-M."/>
            <person name="Levine A."/>
            <person name="Liu H."/>
            <person name="Masuda S."/>
            <person name="Mauel C."/>
            <person name="Medigue C."/>
            <person name="Medina N."/>
            <person name="Mellado R.P."/>
            <person name="Mizuno M."/>
            <person name="Moestl D."/>
            <person name="Nakai S."/>
            <person name="Noback M."/>
            <person name="Noone D."/>
            <person name="O'Reilly M."/>
            <person name="Ogawa K."/>
            <person name="Ogiwara A."/>
            <person name="Oudega B."/>
            <person name="Park S.-H."/>
            <person name="Parro V."/>
            <person name="Pohl T.M."/>
            <person name="Portetelle D."/>
            <person name="Porwollik S."/>
            <person name="Prescott A.M."/>
            <person name="Presecan E."/>
            <person name="Pujic P."/>
            <person name="Purnelle B."/>
            <person name="Rapoport G."/>
            <person name="Rey M."/>
            <person name="Reynolds S."/>
            <person name="Rieger M."/>
            <person name="Rivolta C."/>
            <person name="Rocha E."/>
            <person name="Roche B."/>
            <person name="Rose M."/>
            <person name="Sadaie Y."/>
            <person name="Sato T."/>
            <person name="Scanlan E."/>
            <person name="Schleich S."/>
            <person name="Schroeter R."/>
            <person name="Scoffone F."/>
            <person name="Sekiguchi J."/>
            <person name="Sekowska A."/>
            <person name="Seror S.J."/>
            <person name="Serror P."/>
            <person name="Shin B.-S."/>
            <person name="Soldo B."/>
            <person name="Sorokin A."/>
            <person name="Tacconi E."/>
            <person name="Takagi T."/>
            <person name="Takahashi H."/>
            <person name="Takemaru K."/>
            <person name="Takeuchi M."/>
            <person name="Tamakoshi A."/>
            <person name="Tanaka T."/>
            <person name="Terpstra P."/>
            <person name="Tognoni A."/>
            <person name="Tosato V."/>
            <person name="Uchiyama S."/>
            <person name="Vandenbol M."/>
            <person name="Vannier F."/>
            <person name="Vassarotti A."/>
            <person name="Viari A."/>
            <person name="Wambutt R."/>
            <person name="Wedler E."/>
            <person name="Wedler H."/>
            <person name="Weitzenegger T."/>
            <person name="Winters P."/>
            <person name="Wipat A."/>
            <person name="Yamamoto H."/>
            <person name="Yamane K."/>
            <person name="Yasumoto K."/>
            <person name="Yata K."/>
            <person name="Yoshida K."/>
            <person name="Yoshikawa H.-F."/>
            <person name="Zumstein E."/>
            <person name="Yoshikawa H."/>
            <person name="Danchin A."/>
        </authorList>
    </citation>
    <scope>NUCLEOTIDE SEQUENCE [LARGE SCALE GENOMIC DNA]</scope>
    <source>
        <strain>168</strain>
    </source>
</reference>
<reference key="5">
    <citation type="journal article" date="2021" name="Redox Biol.">
        <title>The Bacillus subtilis monothiol bacilliredoxin BrxC (YtxJ) and the Bdr (YpdA) disulfide reductase reduce S-bacillithiolated proteins.</title>
        <authorList>
            <person name="Gaballa A."/>
            <person name="Su T.T."/>
            <person name="Helmann J.D."/>
        </authorList>
    </citation>
    <scope>INTERACTION WITH BRXC</scope>
    <scope>IDENTIFICATION BY MASS SPECTROMETRY</scope>
    <source>
        <strain evidence="4">168 / CU1065</strain>
    </source>
</reference>
<reference evidence="6 7" key="6">
    <citation type="journal article" date="2018" name="Proc. Natl. Acad. Sci. U.S.A.">
        <title>Structural basis for antibiotic resistance mediated by the Bacillus subtilis ABCF ATPase VmlR.</title>
        <authorList>
            <person name="Crowe-McAuliffe C."/>
            <person name="Graf M."/>
            <person name="Huter P."/>
            <person name="Takada H."/>
            <person name="Abdelshahid M."/>
            <person name="Novacek J."/>
            <person name="Murina V."/>
            <person name="Atkinson G.C."/>
            <person name="Hauryliuk V."/>
            <person name="Wilson D.N."/>
        </authorList>
    </citation>
    <scope>STRUCTURE BY ELECTRON MICROSCOPY (3.10 ANGSTROMS) OF 1-131 WITH AND WITHOUT VIRGINIAMYCIN M</scope>
    <scope>INTERACTION WITH VMLR</scope>
    <scope>SUBUNIT</scope>
</reference>
<proteinExistence type="evidence at protein level"/>
<organism>
    <name type="scientific">Bacillus subtilis (strain 168)</name>
    <dbReference type="NCBI Taxonomy" id="224308"/>
    <lineage>
        <taxon>Bacteria</taxon>
        <taxon>Bacillati</taxon>
        <taxon>Bacillota</taxon>
        <taxon>Bacilli</taxon>
        <taxon>Bacillales</taxon>
        <taxon>Bacillaceae</taxon>
        <taxon>Bacillus</taxon>
    </lineage>
</organism>
<feature type="chain" id="PRO_0000123106" description="Small ribosomal subunit protein uS11">
    <location>
        <begin position="1"/>
        <end position="131"/>
    </location>
</feature>
<feature type="strand" evidence="8">
    <location>
        <begin position="19"/>
        <end position="27"/>
    </location>
</feature>
<feature type="strand" evidence="8">
    <location>
        <begin position="32"/>
        <end position="37"/>
    </location>
</feature>
<feature type="strand" evidence="8">
    <location>
        <begin position="43"/>
        <end position="48"/>
    </location>
</feature>
<feature type="turn" evidence="8">
    <location>
        <begin position="49"/>
        <end position="53"/>
    </location>
</feature>
<feature type="helix" evidence="8">
    <location>
        <begin position="57"/>
        <end position="60"/>
    </location>
</feature>
<feature type="helix" evidence="8">
    <location>
        <begin position="62"/>
        <end position="79"/>
    </location>
</feature>
<feature type="strand" evidence="8">
    <location>
        <begin position="83"/>
        <end position="91"/>
    </location>
</feature>
<feature type="helix" evidence="8">
    <location>
        <begin position="95"/>
        <end position="105"/>
    </location>
</feature>
<keyword id="KW-0002">3D-structure</keyword>
<keyword id="KW-1185">Reference proteome</keyword>
<keyword id="KW-0687">Ribonucleoprotein</keyword>
<keyword id="KW-0689">Ribosomal protein</keyword>
<keyword id="KW-0694">RNA-binding</keyword>
<keyword id="KW-0699">rRNA-binding</keyword>
<protein>
    <recommendedName>
        <fullName evidence="1">Small ribosomal subunit protein uS11</fullName>
    </recommendedName>
    <alternativeName>
        <fullName evidence="5">30S ribosomal protein S11</fullName>
        <shortName>BS11</shortName>
    </alternativeName>
</protein>
<comment type="function">
    <text evidence="1">Located on the platform of the 30S subunit, it bridges several disparate RNA helices of the 16S rRNA. Forms part of the Shine-Dalgarno cleft in the 70S ribosome.</text>
</comment>
<comment type="subunit">
    <text evidence="1 2 3">Part of the 30S ribosomal subunit (PubMed:30126986). Interacts with proteins S7 and S18. Binds to IF-3 (By similarity). Interacts with VmlR (PubMed:30126986). Interacts with BrxC (PubMed:33722570).</text>
</comment>
<comment type="similarity">
    <text evidence="1">Belongs to the universal ribosomal protein uS11 family.</text>
</comment>